<proteinExistence type="evidence at transcript level"/>
<sequence>MPCVQAQYGSSPQGASPASQGYSYHSSGEYSSDFLTPEFVKFSMDLTNTEITATTSLPSFSTFMDNYSTGYDVKPPCLYQMPLSGQQSSIKVEDIQMHNYQQHSHLPPQSEEMMPHSGSVYYKPSSPPTPTTPGFQVQHSPMWDDPGSLHNFHQNYVATTHMIEQRKTPVSRLSLFSFKQSPPGTPVSSCQMRFDGPLHVPMNPEPAGSHHVVDGQTFAVPNPIRKPASMGFPGLQIGHASQLLDTQVPSPPSRGSPSNEGLCAVCGDNAACQHYGVRTCEGCKGFFKRTVQKNAKYVCLANKNCPVDKRRRNRCQYCRFQKCLAVGMVKEVVRTDSLKGRRGRLPSKPKSPQEPSPPSPPVSLISALVRAHVDSNPAMTSLDYSRFQANPDYQMSGDDTQHIQQFYDLLTGSMEIIRGWAEKIPGFADLPKADQDLLFESAFLELFVLRLAYRSNPVEGKLIFCNGVVLHRLQCVRGFGEWIDSIVEFSSNLQNMNIDISAFSCIAALAMVTERHWLKEPKRVEELQNKIVNCLKDHVTFNNGGLNRPNYLSKLLGKLPELRTLCTQGLQRIFYLKLEDLVPPPAIIDKLFLDTLPF</sequence>
<name>NR4A2_PONAB</name>
<keyword id="KW-0963">Cytoplasm</keyword>
<keyword id="KW-0238">DNA-binding</keyword>
<keyword id="KW-0479">Metal-binding</keyword>
<keyword id="KW-0539">Nucleus</keyword>
<keyword id="KW-0675">Receptor</keyword>
<keyword id="KW-1185">Reference proteome</keyword>
<keyword id="KW-0804">Transcription</keyword>
<keyword id="KW-0805">Transcription regulation</keyword>
<keyword id="KW-0862">Zinc</keyword>
<keyword id="KW-0863">Zinc-finger</keyword>
<protein>
    <recommendedName>
        <fullName>Nuclear receptor subfamily 4 group A member 2</fullName>
    </recommendedName>
</protein>
<reference key="1">
    <citation type="submission" date="2004-11" db="EMBL/GenBank/DDBJ databases">
        <authorList>
            <consortium name="The German cDNA consortium"/>
        </authorList>
    </citation>
    <scope>NUCLEOTIDE SEQUENCE [LARGE SCALE MRNA]</scope>
    <source>
        <tissue>Brain cortex</tissue>
    </source>
</reference>
<organism>
    <name type="scientific">Pongo abelii</name>
    <name type="common">Sumatran orangutan</name>
    <name type="synonym">Pongo pygmaeus abelii</name>
    <dbReference type="NCBI Taxonomy" id="9601"/>
    <lineage>
        <taxon>Eukaryota</taxon>
        <taxon>Metazoa</taxon>
        <taxon>Chordata</taxon>
        <taxon>Craniata</taxon>
        <taxon>Vertebrata</taxon>
        <taxon>Euteleostomi</taxon>
        <taxon>Mammalia</taxon>
        <taxon>Eutheria</taxon>
        <taxon>Euarchontoglires</taxon>
        <taxon>Primates</taxon>
        <taxon>Haplorrhini</taxon>
        <taxon>Catarrhini</taxon>
        <taxon>Hominidae</taxon>
        <taxon>Pongo</taxon>
    </lineage>
</organism>
<dbReference type="EMBL" id="CR860717">
    <property type="protein sequence ID" value="CAH92832.1"/>
    <property type="molecule type" value="mRNA"/>
</dbReference>
<dbReference type="BMRB" id="Q5R5Y4"/>
<dbReference type="SMR" id="Q5R5Y4"/>
<dbReference type="STRING" id="9601.ENSPPYP00000014352"/>
<dbReference type="eggNOG" id="KOG4217">
    <property type="taxonomic scope" value="Eukaryota"/>
</dbReference>
<dbReference type="InParanoid" id="Q5R5Y4"/>
<dbReference type="Proteomes" id="UP000001595">
    <property type="component" value="Unplaced"/>
</dbReference>
<dbReference type="GO" id="GO:0005737">
    <property type="term" value="C:cytoplasm"/>
    <property type="evidence" value="ECO:0007669"/>
    <property type="project" value="UniProtKB-SubCell"/>
</dbReference>
<dbReference type="GO" id="GO:0005654">
    <property type="term" value="C:nucleoplasm"/>
    <property type="evidence" value="ECO:0007669"/>
    <property type="project" value="UniProtKB-ARBA"/>
</dbReference>
<dbReference type="GO" id="GO:0005634">
    <property type="term" value="C:nucleus"/>
    <property type="evidence" value="ECO:0000250"/>
    <property type="project" value="UniProtKB"/>
</dbReference>
<dbReference type="GO" id="GO:0005667">
    <property type="term" value="C:transcription regulator complex"/>
    <property type="evidence" value="ECO:0007669"/>
    <property type="project" value="TreeGrafter"/>
</dbReference>
<dbReference type="GO" id="GO:0001228">
    <property type="term" value="F:DNA-binding transcription activator activity, RNA polymerase II-specific"/>
    <property type="evidence" value="ECO:0000250"/>
    <property type="project" value="UniProtKB"/>
</dbReference>
<dbReference type="GO" id="GO:0035259">
    <property type="term" value="F:nuclear glucocorticoid receptor binding"/>
    <property type="evidence" value="ECO:0007669"/>
    <property type="project" value="TreeGrafter"/>
</dbReference>
<dbReference type="GO" id="GO:0004879">
    <property type="term" value="F:nuclear receptor activity"/>
    <property type="evidence" value="ECO:0007669"/>
    <property type="project" value="InterPro"/>
</dbReference>
<dbReference type="GO" id="GO:0046982">
    <property type="term" value="F:protein heterodimerization activity"/>
    <property type="evidence" value="ECO:0000250"/>
    <property type="project" value="UniProtKB"/>
</dbReference>
<dbReference type="GO" id="GO:0000978">
    <property type="term" value="F:RNA polymerase II cis-regulatory region sequence-specific DNA binding"/>
    <property type="evidence" value="ECO:0007669"/>
    <property type="project" value="TreeGrafter"/>
</dbReference>
<dbReference type="GO" id="GO:0008270">
    <property type="term" value="F:zinc ion binding"/>
    <property type="evidence" value="ECO:0007669"/>
    <property type="project" value="UniProtKB-KW"/>
</dbReference>
<dbReference type="GO" id="GO:0071376">
    <property type="term" value="P:cellular response to corticotropin-releasing hormone stimulus"/>
    <property type="evidence" value="ECO:0000250"/>
    <property type="project" value="UniProtKB"/>
</dbReference>
<dbReference type="GO" id="GO:0021953">
    <property type="term" value="P:central nervous system neuron differentiation"/>
    <property type="evidence" value="ECO:0007669"/>
    <property type="project" value="TreeGrafter"/>
</dbReference>
<dbReference type="GO" id="GO:0006351">
    <property type="term" value="P:DNA-templated transcription"/>
    <property type="evidence" value="ECO:0000250"/>
    <property type="project" value="UniProtKB"/>
</dbReference>
<dbReference type="GO" id="GO:0071542">
    <property type="term" value="P:dopaminergic neuron differentiation"/>
    <property type="evidence" value="ECO:0000250"/>
    <property type="project" value="UniProtKB"/>
</dbReference>
<dbReference type="GO" id="GO:0045444">
    <property type="term" value="P:fat cell differentiation"/>
    <property type="evidence" value="ECO:0000250"/>
    <property type="project" value="UniProtKB"/>
</dbReference>
<dbReference type="GO" id="GO:0045944">
    <property type="term" value="P:positive regulation of transcription by RNA polymerase II"/>
    <property type="evidence" value="ECO:0000250"/>
    <property type="project" value="UniProtKB"/>
</dbReference>
<dbReference type="CDD" id="cd06969">
    <property type="entry name" value="NR_DBD_NGFI-B"/>
    <property type="match status" value="1"/>
</dbReference>
<dbReference type="CDD" id="cd07071">
    <property type="entry name" value="NR_LBD_Nurr1"/>
    <property type="match status" value="1"/>
</dbReference>
<dbReference type="FunFam" id="1.10.565.10:FF:000008">
    <property type="entry name" value="Nuclear receptor subfamily 4 group A member 1"/>
    <property type="match status" value="1"/>
</dbReference>
<dbReference type="FunFam" id="3.30.50.10:FF:000009">
    <property type="entry name" value="nuclear receptor subfamily 4 group A member 2"/>
    <property type="match status" value="1"/>
</dbReference>
<dbReference type="Gene3D" id="3.30.50.10">
    <property type="entry name" value="Erythroid Transcription Factor GATA-1, subunit A"/>
    <property type="match status" value="1"/>
</dbReference>
<dbReference type="Gene3D" id="1.10.565.10">
    <property type="entry name" value="Retinoid X Receptor"/>
    <property type="match status" value="1"/>
</dbReference>
<dbReference type="InterPro" id="IPR035500">
    <property type="entry name" value="NHR-like_dom_sf"/>
</dbReference>
<dbReference type="InterPro" id="IPR003070">
    <property type="entry name" value="NR4A1-3"/>
</dbReference>
<dbReference type="InterPro" id="IPR003073">
    <property type="entry name" value="NR4A2"/>
</dbReference>
<dbReference type="InterPro" id="IPR000536">
    <property type="entry name" value="Nucl_hrmn_rcpt_lig-bd"/>
</dbReference>
<dbReference type="InterPro" id="IPR001723">
    <property type="entry name" value="Nuclear_hrmn_rcpt"/>
</dbReference>
<dbReference type="InterPro" id="IPR001628">
    <property type="entry name" value="Znf_hrmn_rcpt"/>
</dbReference>
<dbReference type="InterPro" id="IPR013088">
    <property type="entry name" value="Znf_NHR/GATA"/>
</dbReference>
<dbReference type="PANTHER" id="PTHR24085">
    <property type="entry name" value="NUCLEAR HORMONE RECEPTOR"/>
    <property type="match status" value="1"/>
</dbReference>
<dbReference type="PANTHER" id="PTHR24085:SF0">
    <property type="entry name" value="NUCLEAR RECEPTOR SUBFAMILY 4 GROUP A MEMBER 2"/>
    <property type="match status" value="1"/>
</dbReference>
<dbReference type="Pfam" id="PF00104">
    <property type="entry name" value="Hormone_recep"/>
    <property type="match status" value="1"/>
</dbReference>
<dbReference type="Pfam" id="PF00105">
    <property type="entry name" value="zf-C4"/>
    <property type="match status" value="1"/>
</dbReference>
<dbReference type="PRINTS" id="PR01284">
    <property type="entry name" value="NUCLEARECPTR"/>
</dbReference>
<dbReference type="PRINTS" id="PR01287">
    <property type="entry name" value="NURRNUCRCPTR"/>
</dbReference>
<dbReference type="PRINTS" id="PR00398">
    <property type="entry name" value="STRDHORMONER"/>
</dbReference>
<dbReference type="PRINTS" id="PR00047">
    <property type="entry name" value="STROIDFINGER"/>
</dbReference>
<dbReference type="SMART" id="SM00430">
    <property type="entry name" value="HOLI"/>
    <property type="match status" value="1"/>
</dbReference>
<dbReference type="SMART" id="SM00399">
    <property type="entry name" value="ZnF_C4"/>
    <property type="match status" value="1"/>
</dbReference>
<dbReference type="SUPFAM" id="SSF57716">
    <property type="entry name" value="Glucocorticoid receptor-like (DNA-binding domain)"/>
    <property type="match status" value="1"/>
</dbReference>
<dbReference type="SUPFAM" id="SSF48508">
    <property type="entry name" value="Nuclear receptor ligand-binding domain"/>
    <property type="match status" value="1"/>
</dbReference>
<dbReference type="PROSITE" id="PS51843">
    <property type="entry name" value="NR_LBD"/>
    <property type="match status" value="1"/>
</dbReference>
<dbReference type="PROSITE" id="PS00031">
    <property type="entry name" value="NUCLEAR_REC_DBD_1"/>
    <property type="match status" value="1"/>
</dbReference>
<dbReference type="PROSITE" id="PS51030">
    <property type="entry name" value="NUCLEAR_REC_DBD_2"/>
    <property type="match status" value="1"/>
</dbReference>
<comment type="function">
    <text evidence="3">Transcriptional regulator which is important for the differentiation and maintenance of meso-diencephalic dopaminergic (mdDA) neurons during development. It is crucial for expression of a set of genes such as SLC6A3, SLC18A2, TH and DRD2 which are essential for development of mdDA neurons (By similarity).</text>
</comment>
<comment type="subunit">
    <text evidence="1">Interacts with SFPQ, NCOR2, SIN3A and HADC1. The interaction with NCOR2 increases in the absence of PITX3. Interacts with PER2 (By similarity).</text>
</comment>
<comment type="subcellular location">
    <subcellularLocation>
        <location evidence="2">Cytoplasm</location>
    </subcellularLocation>
    <subcellularLocation>
        <location evidence="2">Nucleus</location>
    </subcellularLocation>
    <text evidence="2">Mostly nuclear; oxidative stress promotes cytoplasmic localization.</text>
</comment>
<comment type="domain">
    <text evidence="1">The ligand-binding domain (LBD) contains no cavity as a result of the tight packing of side chains from several bulky hydrophobic residues in the region normally occupied by ligands. NR4A2 lacks a 'classical' binding site for coactivators (By similarity).</text>
</comment>
<comment type="similarity">
    <text evidence="7">Belongs to the nuclear hormone receptor family.</text>
</comment>
<gene>
    <name type="primary">NR4A2</name>
</gene>
<feature type="chain" id="PRO_0000326152" description="Nuclear receptor subfamily 4 group A member 2">
    <location>
        <begin position="1"/>
        <end position="598"/>
    </location>
</feature>
<feature type="domain" description="NR LBD" evidence="5">
    <location>
        <begin position="360"/>
        <end position="595"/>
    </location>
</feature>
<feature type="DNA-binding region" description="Nuclear receptor" evidence="4">
    <location>
        <begin position="260"/>
        <end position="335"/>
    </location>
</feature>
<feature type="zinc finger region" description="NR C4-type" evidence="4">
    <location>
        <begin position="263"/>
        <end position="283"/>
    </location>
</feature>
<feature type="zinc finger region" description="NR C4-type" evidence="4">
    <location>
        <begin position="299"/>
        <end position="318"/>
    </location>
</feature>
<feature type="region of interest" description="Disordered" evidence="6">
    <location>
        <begin position="1"/>
        <end position="22"/>
    </location>
</feature>
<feature type="region of interest" description="Disordered" evidence="6">
    <location>
        <begin position="337"/>
        <end position="361"/>
    </location>
</feature>
<feature type="short sequence motif" description="Bipartite nuclear localization signal (NLS1)" evidence="1">
    <location>
        <begin position="287"/>
        <end position="314"/>
    </location>
</feature>
<feature type="short sequence motif" description="Nuclear localization signal (NLS1)" evidence="1">
    <location>
        <begin position="338"/>
        <end position="350"/>
    </location>
</feature>
<feature type="short sequence motif" description="nuclear export sequence (NES1)" evidence="1">
    <location>
        <begin position="443"/>
        <end position="452"/>
    </location>
</feature>
<feature type="short sequence motif" description="nuclear export sequence (NES2)" evidence="1">
    <location>
        <begin position="568"/>
        <end position="577"/>
    </location>
</feature>
<feature type="compositionally biased region" description="Polar residues" evidence="6">
    <location>
        <begin position="7"/>
        <end position="18"/>
    </location>
</feature>
<feature type="compositionally biased region" description="Pro residues" evidence="6">
    <location>
        <begin position="352"/>
        <end position="361"/>
    </location>
</feature>
<accession>Q5R5Y4</accession>
<evidence type="ECO:0000250" key="1"/>
<evidence type="ECO:0000250" key="2">
    <source>
        <dbReference type="UniProtKB" id="P43354"/>
    </source>
</evidence>
<evidence type="ECO:0000250" key="3">
    <source>
        <dbReference type="UniProtKB" id="Q06219"/>
    </source>
</evidence>
<evidence type="ECO:0000255" key="4">
    <source>
        <dbReference type="PROSITE-ProRule" id="PRU00407"/>
    </source>
</evidence>
<evidence type="ECO:0000255" key="5">
    <source>
        <dbReference type="PROSITE-ProRule" id="PRU01189"/>
    </source>
</evidence>
<evidence type="ECO:0000256" key="6">
    <source>
        <dbReference type="SAM" id="MobiDB-lite"/>
    </source>
</evidence>
<evidence type="ECO:0000305" key="7"/>